<reference key="1">
    <citation type="journal article" date="2002" name="Proc. Natl. Acad. Sci. U.S.A.">
        <title>Complete genome sequence and comparative genomic analysis of an emerging human pathogen, serotype V Streptococcus agalactiae.</title>
        <authorList>
            <person name="Tettelin H."/>
            <person name="Masignani V."/>
            <person name="Cieslewicz M.J."/>
            <person name="Eisen J.A."/>
            <person name="Peterson S.N."/>
            <person name="Wessels M.R."/>
            <person name="Paulsen I.T."/>
            <person name="Nelson K.E."/>
            <person name="Margarit I."/>
            <person name="Read T.D."/>
            <person name="Madoff L.C."/>
            <person name="Wolf A.M."/>
            <person name="Beanan M.J."/>
            <person name="Brinkac L.M."/>
            <person name="Daugherty S.C."/>
            <person name="DeBoy R.T."/>
            <person name="Durkin A.S."/>
            <person name="Kolonay J.F."/>
            <person name="Madupu R."/>
            <person name="Lewis M.R."/>
            <person name="Radune D."/>
            <person name="Fedorova N.B."/>
            <person name="Scanlan D."/>
            <person name="Khouri H.M."/>
            <person name="Mulligan S."/>
            <person name="Carty H.A."/>
            <person name="Cline R.T."/>
            <person name="Van Aken S.E."/>
            <person name="Gill J."/>
            <person name="Scarselli M."/>
            <person name="Mora M."/>
            <person name="Iacobini E.T."/>
            <person name="Brettoni C."/>
            <person name="Galli G."/>
            <person name="Mariani M."/>
            <person name="Vegni F."/>
            <person name="Maione D."/>
            <person name="Rinaudo D."/>
            <person name="Rappuoli R."/>
            <person name="Telford J.L."/>
            <person name="Kasper D.L."/>
            <person name="Grandi G."/>
            <person name="Fraser C.M."/>
        </authorList>
    </citation>
    <scope>NUCLEOTIDE SEQUENCE [LARGE SCALE GENOMIC DNA]</scope>
    <source>
        <strain>ATCC BAA-611 / 2603 V/R</strain>
    </source>
</reference>
<evidence type="ECO:0000255" key="1">
    <source>
        <dbReference type="HAMAP-Rule" id="MF_00044"/>
    </source>
</evidence>
<organism>
    <name type="scientific">Streptococcus agalactiae serotype V (strain ATCC BAA-611 / 2603 V/R)</name>
    <dbReference type="NCBI Taxonomy" id="208435"/>
    <lineage>
        <taxon>Bacteria</taxon>
        <taxon>Bacillati</taxon>
        <taxon>Bacillota</taxon>
        <taxon>Bacilli</taxon>
        <taxon>Lactobacillales</taxon>
        <taxon>Streptococcaceae</taxon>
        <taxon>Streptococcus</taxon>
    </lineage>
</organism>
<feature type="chain" id="PRO_0000110950" description="Aspartate--tRNA ligase">
    <location>
        <begin position="1"/>
        <end position="583"/>
    </location>
</feature>
<feature type="region of interest" description="Aspartate" evidence="1">
    <location>
        <begin position="198"/>
        <end position="201"/>
    </location>
</feature>
<feature type="binding site" evidence="1">
    <location>
        <position position="174"/>
    </location>
    <ligand>
        <name>L-aspartate</name>
        <dbReference type="ChEBI" id="CHEBI:29991"/>
    </ligand>
</feature>
<feature type="binding site" evidence="1">
    <location>
        <begin position="220"/>
        <end position="222"/>
    </location>
    <ligand>
        <name>ATP</name>
        <dbReference type="ChEBI" id="CHEBI:30616"/>
    </ligand>
</feature>
<feature type="binding site" evidence="1">
    <location>
        <position position="220"/>
    </location>
    <ligand>
        <name>L-aspartate</name>
        <dbReference type="ChEBI" id="CHEBI:29991"/>
    </ligand>
</feature>
<feature type="binding site" evidence="1">
    <location>
        <position position="229"/>
    </location>
    <ligand>
        <name>ATP</name>
        <dbReference type="ChEBI" id="CHEBI:30616"/>
    </ligand>
</feature>
<feature type="binding site" evidence="1">
    <location>
        <position position="443"/>
    </location>
    <ligand>
        <name>L-aspartate</name>
        <dbReference type="ChEBI" id="CHEBI:29991"/>
    </ligand>
</feature>
<feature type="binding site" evidence="1">
    <location>
        <position position="477"/>
    </location>
    <ligand>
        <name>ATP</name>
        <dbReference type="ChEBI" id="CHEBI:30616"/>
    </ligand>
</feature>
<feature type="binding site" evidence="1">
    <location>
        <position position="484"/>
    </location>
    <ligand>
        <name>L-aspartate</name>
        <dbReference type="ChEBI" id="CHEBI:29991"/>
    </ligand>
</feature>
<feature type="binding site" evidence="1">
    <location>
        <begin position="529"/>
        <end position="532"/>
    </location>
    <ligand>
        <name>ATP</name>
        <dbReference type="ChEBI" id="CHEBI:30616"/>
    </ligand>
</feature>
<accession>Q8DWV5</accession>
<dbReference type="EC" id="6.1.1.12" evidence="1"/>
<dbReference type="EMBL" id="AE009948">
    <property type="protein sequence ID" value="AAN00965.1"/>
    <property type="molecule type" value="Genomic_DNA"/>
</dbReference>
<dbReference type="RefSeq" id="NP_689092.1">
    <property type="nucleotide sequence ID" value="NC_004116.1"/>
</dbReference>
<dbReference type="RefSeq" id="WP_000830929.1">
    <property type="nucleotide sequence ID" value="NC_004116.1"/>
</dbReference>
<dbReference type="SMR" id="Q8DWV5"/>
<dbReference type="STRING" id="208435.SAG2107"/>
<dbReference type="KEGG" id="sag:SAG2107"/>
<dbReference type="PATRIC" id="fig|208435.3.peg.2110"/>
<dbReference type="HOGENOM" id="CLU_014330_3_2_9"/>
<dbReference type="OrthoDB" id="9802326at2"/>
<dbReference type="Proteomes" id="UP000000821">
    <property type="component" value="Chromosome"/>
</dbReference>
<dbReference type="GO" id="GO:0005737">
    <property type="term" value="C:cytoplasm"/>
    <property type="evidence" value="ECO:0007669"/>
    <property type="project" value="UniProtKB-SubCell"/>
</dbReference>
<dbReference type="GO" id="GO:0004815">
    <property type="term" value="F:aspartate-tRNA ligase activity"/>
    <property type="evidence" value="ECO:0007669"/>
    <property type="project" value="UniProtKB-UniRule"/>
</dbReference>
<dbReference type="GO" id="GO:0005524">
    <property type="term" value="F:ATP binding"/>
    <property type="evidence" value="ECO:0007669"/>
    <property type="project" value="UniProtKB-UniRule"/>
</dbReference>
<dbReference type="GO" id="GO:0140096">
    <property type="term" value="F:catalytic activity, acting on a protein"/>
    <property type="evidence" value="ECO:0007669"/>
    <property type="project" value="UniProtKB-ARBA"/>
</dbReference>
<dbReference type="GO" id="GO:0003676">
    <property type="term" value="F:nucleic acid binding"/>
    <property type="evidence" value="ECO:0007669"/>
    <property type="project" value="InterPro"/>
</dbReference>
<dbReference type="GO" id="GO:0016740">
    <property type="term" value="F:transferase activity"/>
    <property type="evidence" value="ECO:0007669"/>
    <property type="project" value="UniProtKB-ARBA"/>
</dbReference>
<dbReference type="GO" id="GO:0006422">
    <property type="term" value="P:aspartyl-tRNA aminoacylation"/>
    <property type="evidence" value="ECO:0007669"/>
    <property type="project" value="UniProtKB-UniRule"/>
</dbReference>
<dbReference type="CDD" id="cd00777">
    <property type="entry name" value="AspRS_core"/>
    <property type="match status" value="1"/>
</dbReference>
<dbReference type="CDD" id="cd04317">
    <property type="entry name" value="EcAspRS_like_N"/>
    <property type="match status" value="1"/>
</dbReference>
<dbReference type="Gene3D" id="3.30.930.10">
    <property type="entry name" value="Bira Bifunctional Protein, Domain 2"/>
    <property type="match status" value="1"/>
</dbReference>
<dbReference type="Gene3D" id="3.30.1360.30">
    <property type="entry name" value="GAD-like domain"/>
    <property type="match status" value="1"/>
</dbReference>
<dbReference type="Gene3D" id="2.40.50.140">
    <property type="entry name" value="Nucleic acid-binding proteins"/>
    <property type="match status" value="1"/>
</dbReference>
<dbReference type="HAMAP" id="MF_00044">
    <property type="entry name" value="Asp_tRNA_synth_type1"/>
    <property type="match status" value="1"/>
</dbReference>
<dbReference type="InterPro" id="IPR004364">
    <property type="entry name" value="Aa-tRNA-synt_II"/>
</dbReference>
<dbReference type="InterPro" id="IPR006195">
    <property type="entry name" value="aa-tRNA-synth_II"/>
</dbReference>
<dbReference type="InterPro" id="IPR045864">
    <property type="entry name" value="aa-tRNA-synth_II/BPL/LPL"/>
</dbReference>
<dbReference type="InterPro" id="IPR004524">
    <property type="entry name" value="Asp-tRNA-ligase_1"/>
</dbReference>
<dbReference type="InterPro" id="IPR047089">
    <property type="entry name" value="Asp-tRNA-ligase_1_N"/>
</dbReference>
<dbReference type="InterPro" id="IPR002312">
    <property type="entry name" value="Asp/Asn-tRNA-synth_IIb"/>
</dbReference>
<dbReference type="InterPro" id="IPR047090">
    <property type="entry name" value="AspRS_core"/>
</dbReference>
<dbReference type="InterPro" id="IPR004115">
    <property type="entry name" value="GAD-like_sf"/>
</dbReference>
<dbReference type="InterPro" id="IPR029351">
    <property type="entry name" value="GAD_dom"/>
</dbReference>
<dbReference type="InterPro" id="IPR012340">
    <property type="entry name" value="NA-bd_OB-fold"/>
</dbReference>
<dbReference type="InterPro" id="IPR004365">
    <property type="entry name" value="NA-bd_OB_tRNA"/>
</dbReference>
<dbReference type="NCBIfam" id="TIGR00459">
    <property type="entry name" value="aspS_bact"/>
    <property type="match status" value="1"/>
</dbReference>
<dbReference type="NCBIfam" id="NF001750">
    <property type="entry name" value="PRK00476.1"/>
    <property type="match status" value="1"/>
</dbReference>
<dbReference type="PANTHER" id="PTHR22594:SF5">
    <property type="entry name" value="ASPARTATE--TRNA LIGASE, MITOCHONDRIAL"/>
    <property type="match status" value="1"/>
</dbReference>
<dbReference type="PANTHER" id="PTHR22594">
    <property type="entry name" value="ASPARTYL/LYSYL-TRNA SYNTHETASE"/>
    <property type="match status" value="1"/>
</dbReference>
<dbReference type="Pfam" id="PF02938">
    <property type="entry name" value="GAD"/>
    <property type="match status" value="1"/>
</dbReference>
<dbReference type="Pfam" id="PF00152">
    <property type="entry name" value="tRNA-synt_2"/>
    <property type="match status" value="1"/>
</dbReference>
<dbReference type="Pfam" id="PF01336">
    <property type="entry name" value="tRNA_anti-codon"/>
    <property type="match status" value="1"/>
</dbReference>
<dbReference type="PRINTS" id="PR01042">
    <property type="entry name" value="TRNASYNTHASP"/>
</dbReference>
<dbReference type="SUPFAM" id="SSF55681">
    <property type="entry name" value="Class II aaRS and biotin synthetases"/>
    <property type="match status" value="1"/>
</dbReference>
<dbReference type="SUPFAM" id="SSF55261">
    <property type="entry name" value="GAD domain-like"/>
    <property type="match status" value="1"/>
</dbReference>
<dbReference type="SUPFAM" id="SSF50249">
    <property type="entry name" value="Nucleic acid-binding proteins"/>
    <property type="match status" value="1"/>
</dbReference>
<dbReference type="PROSITE" id="PS50862">
    <property type="entry name" value="AA_TRNA_LIGASE_II"/>
    <property type="match status" value="1"/>
</dbReference>
<sequence length="583" mass="66084">MKRSMYAGRVRSEHIGTSITLKGWVGRRRDLGGLIFIDLRDREGIMQLVINPEEVSASVMATAESLRSEFVIEVSGVVTAREQANDNLPTGEVELKVQELSILNTSKTTPFEIKDGIEANDDTRMRYRYLDLRRPEMLENFKLRAKVTHSIRNYLDNLEFIDVETPMLTKSTPEGARDYLVPSRVNQGHFYALPQSPQITKQLLMNAGFDRYYQIVKCFRDEDLRGDRQPEFTQVDLETSFLSDQEIQDIVEGMIAKVMKDTKGLEVSLPFPRMAYDDAMNNYGSDKPDTRFDMLLQDLTEIVKEVDFKVFSEASVVKAIVVKDKADKYSRKNIDKLTEIAKQYGAKGLAWLKYADNTISGPVAKFLTAIEGRLTEALQLENNDLILFVADSLEVANETLGALRTRIAKELELIDYSKFNFLWVVDWPMFEWSEEEGRYMSAHHPFTLPTAETAHELEGDLAKVRAVAYDIVLNGYELGGGSLRINQKDTQERMFKALGFSAESAQEQFGFLLEAMDYGFPPHGGLAIGLDRFVMLLAGKDNIREVIAFPKNNKASDPMTQAPSLVSEQQLEELSLTVESYEN</sequence>
<protein>
    <recommendedName>
        <fullName evidence="1">Aspartate--tRNA ligase</fullName>
        <ecNumber evidence="1">6.1.1.12</ecNumber>
    </recommendedName>
    <alternativeName>
        <fullName evidence="1">Aspartyl-tRNA synthetase</fullName>
        <shortName evidence="1">AspRS</shortName>
    </alternativeName>
</protein>
<gene>
    <name evidence="1" type="primary">aspS</name>
    <name type="ordered locus">SAG2107</name>
</gene>
<name>SYD_STRA5</name>
<keyword id="KW-0030">Aminoacyl-tRNA synthetase</keyword>
<keyword id="KW-0067">ATP-binding</keyword>
<keyword id="KW-0963">Cytoplasm</keyword>
<keyword id="KW-0436">Ligase</keyword>
<keyword id="KW-0547">Nucleotide-binding</keyword>
<keyword id="KW-0648">Protein biosynthesis</keyword>
<keyword id="KW-1185">Reference proteome</keyword>
<proteinExistence type="inferred from homology"/>
<comment type="function">
    <text evidence="1">Catalyzes the attachment of L-aspartate to tRNA(Asp) in a two-step reaction: L-aspartate is first activated by ATP to form Asp-AMP and then transferred to the acceptor end of tRNA(Asp).</text>
</comment>
<comment type="catalytic activity">
    <reaction evidence="1">
        <text>tRNA(Asp) + L-aspartate + ATP = L-aspartyl-tRNA(Asp) + AMP + diphosphate</text>
        <dbReference type="Rhea" id="RHEA:19649"/>
        <dbReference type="Rhea" id="RHEA-COMP:9660"/>
        <dbReference type="Rhea" id="RHEA-COMP:9678"/>
        <dbReference type="ChEBI" id="CHEBI:29991"/>
        <dbReference type="ChEBI" id="CHEBI:30616"/>
        <dbReference type="ChEBI" id="CHEBI:33019"/>
        <dbReference type="ChEBI" id="CHEBI:78442"/>
        <dbReference type="ChEBI" id="CHEBI:78516"/>
        <dbReference type="ChEBI" id="CHEBI:456215"/>
        <dbReference type="EC" id="6.1.1.12"/>
    </reaction>
</comment>
<comment type="subunit">
    <text evidence="1">Homodimer.</text>
</comment>
<comment type="subcellular location">
    <subcellularLocation>
        <location evidence="1">Cytoplasm</location>
    </subcellularLocation>
</comment>
<comment type="similarity">
    <text evidence="1">Belongs to the class-II aminoacyl-tRNA synthetase family. Type 1 subfamily.</text>
</comment>